<feature type="initiator methionine" description="Removed">
    <location>
        <position position="1"/>
    </location>
</feature>
<feature type="chain" id="PRO_0000052616" description="Hemoglobin subunit alpha">
    <location>
        <begin position="2"/>
        <end position="142"/>
    </location>
</feature>
<feature type="domain" description="Globin" evidence="1">
    <location>
        <begin position="2"/>
        <end position="142"/>
    </location>
</feature>
<feature type="binding site" evidence="1">
    <location>
        <position position="60"/>
    </location>
    <ligand>
        <name>O2</name>
        <dbReference type="ChEBI" id="CHEBI:15379"/>
    </ligand>
</feature>
<feature type="binding site" description="proximal binding residue" evidence="1">
    <location>
        <position position="89"/>
    </location>
    <ligand>
        <name>heme b</name>
        <dbReference type="ChEBI" id="CHEBI:60344"/>
    </ligand>
    <ligandPart>
        <name>Fe</name>
        <dbReference type="ChEBI" id="CHEBI:18248"/>
    </ligandPart>
</feature>
<feature type="helix" evidence="2">
    <location>
        <begin position="5"/>
        <end position="20"/>
    </location>
</feature>
<feature type="helix" evidence="2">
    <location>
        <begin position="22"/>
        <end position="36"/>
    </location>
</feature>
<feature type="helix" evidence="2">
    <location>
        <begin position="38"/>
        <end position="44"/>
    </location>
</feature>
<feature type="helix" evidence="2">
    <location>
        <begin position="55"/>
        <end position="71"/>
    </location>
</feature>
<feature type="helix" evidence="2">
    <location>
        <begin position="78"/>
        <end position="91"/>
    </location>
</feature>
<feature type="helix" evidence="2">
    <location>
        <begin position="98"/>
        <end position="114"/>
    </location>
</feature>
<feature type="helix" evidence="2">
    <location>
        <begin position="120"/>
        <end position="137"/>
    </location>
</feature>
<feature type="turn" evidence="2">
    <location>
        <begin position="138"/>
        <end position="140"/>
    </location>
</feature>
<dbReference type="EMBL" id="AB023722">
    <property type="protein sequence ID" value="BAA75249.1"/>
    <property type="molecule type" value="mRNA"/>
</dbReference>
<dbReference type="PDB" id="1CG5">
    <property type="method" value="X-ray"/>
    <property type="resolution" value="1.60 A"/>
    <property type="chains" value="A=2-142"/>
</dbReference>
<dbReference type="PDB" id="1CG8">
    <property type="method" value="X-ray"/>
    <property type="resolution" value="1.90 A"/>
    <property type="chains" value="A=2-142"/>
</dbReference>
<dbReference type="PDBsum" id="1CG5"/>
<dbReference type="PDBsum" id="1CG8"/>
<dbReference type="SMR" id="P56691"/>
<dbReference type="MINT" id="P56691"/>
<dbReference type="EvolutionaryTrace" id="P56691"/>
<dbReference type="GO" id="GO:0072562">
    <property type="term" value="C:blood microparticle"/>
    <property type="evidence" value="ECO:0007669"/>
    <property type="project" value="TreeGrafter"/>
</dbReference>
<dbReference type="GO" id="GO:0031838">
    <property type="term" value="C:haptoglobin-hemoglobin complex"/>
    <property type="evidence" value="ECO:0007669"/>
    <property type="project" value="TreeGrafter"/>
</dbReference>
<dbReference type="GO" id="GO:0005833">
    <property type="term" value="C:hemoglobin complex"/>
    <property type="evidence" value="ECO:0007669"/>
    <property type="project" value="InterPro"/>
</dbReference>
<dbReference type="GO" id="GO:0031720">
    <property type="term" value="F:haptoglobin binding"/>
    <property type="evidence" value="ECO:0007669"/>
    <property type="project" value="TreeGrafter"/>
</dbReference>
<dbReference type="GO" id="GO:0020037">
    <property type="term" value="F:heme binding"/>
    <property type="evidence" value="ECO:0007669"/>
    <property type="project" value="InterPro"/>
</dbReference>
<dbReference type="GO" id="GO:0046872">
    <property type="term" value="F:metal ion binding"/>
    <property type="evidence" value="ECO:0007669"/>
    <property type="project" value="UniProtKB-KW"/>
</dbReference>
<dbReference type="GO" id="GO:0043177">
    <property type="term" value="F:organic acid binding"/>
    <property type="evidence" value="ECO:0007669"/>
    <property type="project" value="TreeGrafter"/>
</dbReference>
<dbReference type="GO" id="GO:0019825">
    <property type="term" value="F:oxygen binding"/>
    <property type="evidence" value="ECO:0007669"/>
    <property type="project" value="InterPro"/>
</dbReference>
<dbReference type="GO" id="GO:0005344">
    <property type="term" value="F:oxygen carrier activity"/>
    <property type="evidence" value="ECO:0007669"/>
    <property type="project" value="UniProtKB-KW"/>
</dbReference>
<dbReference type="GO" id="GO:0004601">
    <property type="term" value="F:peroxidase activity"/>
    <property type="evidence" value="ECO:0007669"/>
    <property type="project" value="TreeGrafter"/>
</dbReference>
<dbReference type="GO" id="GO:0042744">
    <property type="term" value="P:hydrogen peroxide catabolic process"/>
    <property type="evidence" value="ECO:0007669"/>
    <property type="project" value="TreeGrafter"/>
</dbReference>
<dbReference type="CDD" id="cd08927">
    <property type="entry name" value="Hb-alpha-like"/>
    <property type="match status" value="1"/>
</dbReference>
<dbReference type="Gene3D" id="1.10.490.10">
    <property type="entry name" value="Globins"/>
    <property type="match status" value="1"/>
</dbReference>
<dbReference type="InterPro" id="IPR000971">
    <property type="entry name" value="Globin"/>
</dbReference>
<dbReference type="InterPro" id="IPR009050">
    <property type="entry name" value="Globin-like_sf"/>
</dbReference>
<dbReference type="InterPro" id="IPR012292">
    <property type="entry name" value="Globin/Proto"/>
</dbReference>
<dbReference type="InterPro" id="IPR002338">
    <property type="entry name" value="Hemoglobin_a-typ"/>
</dbReference>
<dbReference type="InterPro" id="IPR050056">
    <property type="entry name" value="Hemoglobin_oxygen_transport"/>
</dbReference>
<dbReference type="PANTHER" id="PTHR11442">
    <property type="entry name" value="HEMOGLOBIN FAMILY MEMBER"/>
    <property type="match status" value="1"/>
</dbReference>
<dbReference type="Pfam" id="PF00042">
    <property type="entry name" value="Globin"/>
    <property type="match status" value="1"/>
</dbReference>
<dbReference type="PRINTS" id="PR00612">
    <property type="entry name" value="ALPHAHAEM"/>
</dbReference>
<dbReference type="SUPFAM" id="SSF46458">
    <property type="entry name" value="Globin-like"/>
    <property type="match status" value="1"/>
</dbReference>
<dbReference type="PROSITE" id="PS01033">
    <property type="entry name" value="GLOBIN"/>
    <property type="match status" value="1"/>
</dbReference>
<protein>
    <recommendedName>
        <fullName>Hemoglobin subunit alpha</fullName>
    </recommendedName>
    <alternativeName>
        <fullName>Alpha-globin</fullName>
    </alternativeName>
    <alternativeName>
        <fullName>Hemoglobin alpha chain</fullName>
    </alternativeName>
</protein>
<proteinExistence type="evidence at protein level"/>
<reference key="1">
    <citation type="journal article" date="1999" name="Acta Crystallogr. D">
        <title>Structures of the deoxy and CO forms of haemoglobin from Dasyatis akajei, a cartilaginous fish.</title>
        <authorList>
            <person name="Chong K.T."/>
            <person name="Miyazaki G."/>
            <person name="Morimoto H."/>
            <person name="Oda Y."/>
            <person name="Park S.-Y."/>
        </authorList>
    </citation>
    <scope>NUCLEOTIDE SEQUENCE [MRNA]</scope>
    <scope>X-RAY CRYSTALLOGRAPHY (1.6 ANGSTROMS)</scope>
    <source>
        <tissue>Blood</tissue>
    </source>
</reference>
<organism>
    <name type="scientific">Hemitrygon akajei</name>
    <name type="common">Red stingray</name>
    <name type="synonym">Dasyatis akajei</name>
    <dbReference type="NCBI Taxonomy" id="2704970"/>
    <lineage>
        <taxon>Eukaryota</taxon>
        <taxon>Metazoa</taxon>
        <taxon>Chordata</taxon>
        <taxon>Craniata</taxon>
        <taxon>Vertebrata</taxon>
        <taxon>Chondrichthyes</taxon>
        <taxon>Elasmobranchii</taxon>
        <taxon>Batoidea</taxon>
        <taxon>Myliobatiformes</taxon>
        <taxon>Dasyatidae</taxon>
        <taxon>Hemitrygon</taxon>
    </lineage>
</organism>
<evidence type="ECO:0000255" key="1">
    <source>
        <dbReference type="PROSITE-ProRule" id="PRU00238"/>
    </source>
</evidence>
<evidence type="ECO:0007829" key="2">
    <source>
        <dbReference type="PDB" id="1CG5"/>
    </source>
</evidence>
<accession>P56691</accession>
<keyword id="KW-0002">3D-structure</keyword>
<keyword id="KW-0349">Heme</keyword>
<keyword id="KW-0408">Iron</keyword>
<keyword id="KW-0479">Metal-binding</keyword>
<keyword id="KW-0561">Oxygen transport</keyword>
<keyword id="KW-0813">Transport</keyword>
<sequence length="142" mass="15968">MVLSSQNKKAIEELGNLIKANAEAWGADALARLFELHPQTKTYFSKFSGFEACNEQVKKHGKRVMNALADATHHLDNLHLHLEDLARKHGENLLVDPHNFHLFADCIVVTLAVNLQAFTPVTHCAVDKFLELVAYELSSCYR</sequence>
<name>HBA_HEMAK</name>
<gene>
    <name type="primary">hba</name>
</gene>
<comment type="function">
    <text>Involved in oxygen transport from gills to the various peripheral tissues.</text>
</comment>
<comment type="subunit">
    <text>Heterotetramer of two alpha chains and two beta chains.</text>
</comment>
<comment type="tissue specificity">
    <text>Red blood cells.</text>
</comment>
<comment type="similarity">
    <text evidence="1">Belongs to the globin family.</text>
</comment>